<accession>P0C396</accession>
<name>PETN_ORYSI</name>
<sequence length="29" mass="3170">MDIVSLAWAALMVVFTFSLSLVVWGRSGL</sequence>
<reference key="1">
    <citation type="journal article" date="2004" name="Plant Physiol.">
        <title>A comparison of rice chloroplast genomes.</title>
        <authorList>
            <person name="Tang J."/>
            <person name="Xia H."/>
            <person name="Cao M."/>
            <person name="Zhang X."/>
            <person name="Zeng W."/>
            <person name="Hu S."/>
            <person name="Tong W."/>
            <person name="Wang J."/>
            <person name="Wang J."/>
            <person name="Yu J."/>
            <person name="Yang H."/>
            <person name="Zhu L."/>
        </authorList>
    </citation>
    <scope>NUCLEOTIDE SEQUENCE [LARGE SCALE GENOMIC DNA]</scope>
    <source>
        <strain>cv. 93-11</strain>
    </source>
</reference>
<organism>
    <name type="scientific">Oryza sativa subsp. indica</name>
    <name type="common">Rice</name>
    <dbReference type="NCBI Taxonomy" id="39946"/>
    <lineage>
        <taxon>Eukaryota</taxon>
        <taxon>Viridiplantae</taxon>
        <taxon>Streptophyta</taxon>
        <taxon>Embryophyta</taxon>
        <taxon>Tracheophyta</taxon>
        <taxon>Spermatophyta</taxon>
        <taxon>Magnoliopsida</taxon>
        <taxon>Liliopsida</taxon>
        <taxon>Poales</taxon>
        <taxon>Poaceae</taxon>
        <taxon>BOP clade</taxon>
        <taxon>Oryzoideae</taxon>
        <taxon>Oryzeae</taxon>
        <taxon>Oryzinae</taxon>
        <taxon>Oryza</taxon>
        <taxon>Oryza sativa</taxon>
    </lineage>
</organism>
<protein>
    <recommendedName>
        <fullName>Cytochrome b6-f complex subunit 8</fullName>
    </recommendedName>
    <alternativeName>
        <fullName>Cytochrome b6-f complex subunit PetN</fullName>
    </alternativeName>
    <alternativeName>
        <fullName>Cytochrome b6-f complex subunit VIII</fullName>
    </alternativeName>
</protein>
<keyword id="KW-0150">Chloroplast</keyword>
<keyword id="KW-0249">Electron transport</keyword>
<keyword id="KW-0472">Membrane</keyword>
<keyword id="KW-0602">Photosynthesis</keyword>
<keyword id="KW-0934">Plastid</keyword>
<keyword id="KW-1185">Reference proteome</keyword>
<keyword id="KW-0793">Thylakoid</keyword>
<keyword id="KW-0812">Transmembrane</keyword>
<keyword id="KW-1133">Transmembrane helix</keyword>
<keyword id="KW-0813">Transport</keyword>
<proteinExistence type="inferred from homology"/>
<dbReference type="EMBL" id="AY522329">
    <property type="status" value="NOT_ANNOTATED_CDS"/>
    <property type="molecule type" value="Genomic_DNA"/>
</dbReference>
<dbReference type="SMR" id="P0C396"/>
<dbReference type="Proteomes" id="UP000007015">
    <property type="component" value="Chloroplast"/>
</dbReference>
<dbReference type="GO" id="GO:0009535">
    <property type="term" value="C:chloroplast thylakoid membrane"/>
    <property type="evidence" value="ECO:0007669"/>
    <property type="project" value="UniProtKB-SubCell"/>
</dbReference>
<dbReference type="GO" id="GO:0009512">
    <property type="term" value="C:cytochrome b6f complex"/>
    <property type="evidence" value="ECO:0007669"/>
    <property type="project" value="InterPro"/>
</dbReference>
<dbReference type="GO" id="GO:0009536">
    <property type="term" value="C:plastid"/>
    <property type="evidence" value="ECO:0000305"/>
    <property type="project" value="Gramene"/>
</dbReference>
<dbReference type="GO" id="GO:0045158">
    <property type="term" value="F:electron transporter, transferring electrons within cytochrome b6/f complex of photosystem II activity"/>
    <property type="evidence" value="ECO:0007669"/>
    <property type="project" value="InterPro"/>
</dbReference>
<dbReference type="GO" id="GO:0017004">
    <property type="term" value="P:cytochrome complex assembly"/>
    <property type="evidence" value="ECO:0007669"/>
    <property type="project" value="UniProtKB-UniRule"/>
</dbReference>
<dbReference type="GO" id="GO:0015979">
    <property type="term" value="P:photosynthesis"/>
    <property type="evidence" value="ECO:0007669"/>
    <property type="project" value="UniProtKB-KW"/>
</dbReference>
<dbReference type="HAMAP" id="MF_00395">
    <property type="entry name" value="Cytb6_f_PetN"/>
    <property type="match status" value="1"/>
</dbReference>
<dbReference type="InterPro" id="IPR036143">
    <property type="entry name" value="Cytochr_b6-f_cplx_su8_sf"/>
</dbReference>
<dbReference type="InterPro" id="IPR005497">
    <property type="entry name" value="Cytochrome_b6-f_cplx_su8"/>
</dbReference>
<dbReference type="Pfam" id="PF03742">
    <property type="entry name" value="PetN"/>
    <property type="match status" value="1"/>
</dbReference>
<dbReference type="SUPFAM" id="SSF103451">
    <property type="entry name" value="PetN subunit of the cytochrome b6f complex"/>
    <property type="match status" value="1"/>
</dbReference>
<comment type="function">
    <text evidence="1">Component of the cytochrome b6-f complex, which mediates electron transfer between photosystem II (PSII) and photosystem I (PSI), cyclic electron flow around PSI, and state transitions.</text>
</comment>
<comment type="subunit">
    <text evidence="1">The 4 large subunits of the cytochrome b6-f complex are cytochrome b6, subunit IV (17 kDa polypeptide, PetD), cytochrome f and the Rieske protein, while the 4 small subunits are PetG, PetL, PetM and PetN. The complex functions as a dimer (By similarity).</text>
</comment>
<comment type="subcellular location">
    <subcellularLocation>
        <location evidence="1">Plastid</location>
        <location evidence="1">Chloroplast thylakoid membrane</location>
        <topology evidence="1">Single-pass membrane protein</topology>
    </subcellularLocation>
</comment>
<comment type="similarity">
    <text evidence="3">Belongs to the PetN family.</text>
</comment>
<evidence type="ECO:0000250" key="1"/>
<evidence type="ECO:0000255" key="2"/>
<evidence type="ECO:0000305" key="3"/>
<feature type="chain" id="PRO_0000289027" description="Cytochrome b6-f complex subunit 8">
    <location>
        <begin position="1"/>
        <end position="29"/>
    </location>
</feature>
<feature type="transmembrane region" description="Helical" evidence="2">
    <location>
        <begin position="3"/>
        <end position="23"/>
    </location>
</feature>
<gene>
    <name type="primary">petN</name>
</gene>
<geneLocation type="chloroplast"/>